<sequence length="443" mass="48285">MTESEKKQQKPQKAKAEKFKALSAPKGVPDYVPPTSAEFKAVKDAFTSAAHAAGYEHVELPIFEETSLFARGVGESTDVVSKEMYTFADRGGRSVTLRPEGTAGVMRAVIEHNLDRGQLPVKLVYNGPFFRYERPQAGRYRQLQQVGVEAIGVDDPALDAEVIALAHRCFSSIGLNGFRLELTSLGDWDDRPAYRQKLQDFLATLPLDEETQRRAQLNPLRVLDDKRPEMQEMLAEAPLMLDHLSDSSREHFETVTGLLDDLGVGYTINPRMVRGLDYYTKTCFEFVHDGLGAQSGIGGGGRYDGLMAQLGGQDLSGIGFGLGVDRALLALEAEEKRASTGRRVDVYGVALGAEAKRRMVGIVDDLRERGVSADMSYGNRGLKGAMKGADRAGALYALVLGDKELAEGTVTVKDLGAHEQHEVDLAAVVELLAEKTADRTAHA</sequence>
<keyword id="KW-0030">Aminoacyl-tRNA synthetase</keyword>
<keyword id="KW-0067">ATP-binding</keyword>
<keyword id="KW-0963">Cytoplasm</keyword>
<keyword id="KW-0436">Ligase</keyword>
<keyword id="KW-0547">Nucleotide-binding</keyword>
<keyword id="KW-0648">Protein biosynthesis</keyword>
<keyword id="KW-1185">Reference proteome</keyword>
<protein>
    <recommendedName>
        <fullName evidence="1">Histidine--tRNA ligase</fullName>
        <ecNumber evidence="1">6.1.1.21</ecNumber>
    </recommendedName>
    <alternativeName>
        <fullName evidence="1">Histidyl-tRNA synthetase</fullName>
        <shortName evidence="1">HisRS</shortName>
    </alternativeName>
</protein>
<accession>Q4JVE8</accession>
<dbReference type="EC" id="6.1.1.21" evidence="1"/>
<dbReference type="EMBL" id="CR931997">
    <property type="protein sequence ID" value="CAI37209.1"/>
    <property type="molecule type" value="Genomic_DNA"/>
</dbReference>
<dbReference type="RefSeq" id="WP_011273612.1">
    <property type="nucleotide sequence ID" value="NC_007164.1"/>
</dbReference>
<dbReference type="SMR" id="Q4JVE8"/>
<dbReference type="STRING" id="306537.jk1045"/>
<dbReference type="KEGG" id="cjk:jk1045"/>
<dbReference type="PATRIC" id="fig|306537.10.peg.1057"/>
<dbReference type="eggNOG" id="COG0124">
    <property type="taxonomic scope" value="Bacteria"/>
</dbReference>
<dbReference type="HOGENOM" id="CLU_025113_1_1_11"/>
<dbReference type="OrthoDB" id="9800814at2"/>
<dbReference type="Proteomes" id="UP000000545">
    <property type="component" value="Chromosome"/>
</dbReference>
<dbReference type="GO" id="GO:0005737">
    <property type="term" value="C:cytoplasm"/>
    <property type="evidence" value="ECO:0007669"/>
    <property type="project" value="UniProtKB-SubCell"/>
</dbReference>
<dbReference type="GO" id="GO:0005524">
    <property type="term" value="F:ATP binding"/>
    <property type="evidence" value="ECO:0007669"/>
    <property type="project" value="UniProtKB-UniRule"/>
</dbReference>
<dbReference type="GO" id="GO:0004821">
    <property type="term" value="F:histidine-tRNA ligase activity"/>
    <property type="evidence" value="ECO:0007669"/>
    <property type="project" value="UniProtKB-UniRule"/>
</dbReference>
<dbReference type="GO" id="GO:0006427">
    <property type="term" value="P:histidyl-tRNA aminoacylation"/>
    <property type="evidence" value="ECO:0007669"/>
    <property type="project" value="UniProtKB-UniRule"/>
</dbReference>
<dbReference type="CDD" id="cd00773">
    <property type="entry name" value="HisRS-like_core"/>
    <property type="match status" value="1"/>
</dbReference>
<dbReference type="CDD" id="cd00859">
    <property type="entry name" value="HisRS_anticodon"/>
    <property type="match status" value="1"/>
</dbReference>
<dbReference type="FunFam" id="3.30.930.10:FF:000005">
    <property type="entry name" value="Histidine--tRNA ligase"/>
    <property type="match status" value="1"/>
</dbReference>
<dbReference type="Gene3D" id="3.40.50.800">
    <property type="entry name" value="Anticodon-binding domain"/>
    <property type="match status" value="1"/>
</dbReference>
<dbReference type="Gene3D" id="3.30.930.10">
    <property type="entry name" value="Bira Bifunctional Protein, Domain 2"/>
    <property type="match status" value="1"/>
</dbReference>
<dbReference type="HAMAP" id="MF_00127">
    <property type="entry name" value="His_tRNA_synth"/>
    <property type="match status" value="1"/>
</dbReference>
<dbReference type="InterPro" id="IPR006195">
    <property type="entry name" value="aa-tRNA-synth_II"/>
</dbReference>
<dbReference type="InterPro" id="IPR045864">
    <property type="entry name" value="aa-tRNA-synth_II/BPL/LPL"/>
</dbReference>
<dbReference type="InterPro" id="IPR004154">
    <property type="entry name" value="Anticodon-bd"/>
</dbReference>
<dbReference type="InterPro" id="IPR036621">
    <property type="entry name" value="Anticodon-bd_dom_sf"/>
</dbReference>
<dbReference type="InterPro" id="IPR015807">
    <property type="entry name" value="His-tRNA-ligase"/>
</dbReference>
<dbReference type="InterPro" id="IPR041715">
    <property type="entry name" value="HisRS-like_core"/>
</dbReference>
<dbReference type="InterPro" id="IPR004516">
    <property type="entry name" value="HisRS/HisZ"/>
</dbReference>
<dbReference type="InterPro" id="IPR033656">
    <property type="entry name" value="HisRS_anticodon"/>
</dbReference>
<dbReference type="NCBIfam" id="TIGR00442">
    <property type="entry name" value="hisS"/>
    <property type="match status" value="1"/>
</dbReference>
<dbReference type="PANTHER" id="PTHR43707:SF1">
    <property type="entry name" value="HISTIDINE--TRNA LIGASE, MITOCHONDRIAL-RELATED"/>
    <property type="match status" value="1"/>
</dbReference>
<dbReference type="PANTHER" id="PTHR43707">
    <property type="entry name" value="HISTIDYL-TRNA SYNTHETASE"/>
    <property type="match status" value="1"/>
</dbReference>
<dbReference type="Pfam" id="PF03129">
    <property type="entry name" value="HGTP_anticodon"/>
    <property type="match status" value="1"/>
</dbReference>
<dbReference type="Pfam" id="PF13393">
    <property type="entry name" value="tRNA-synt_His"/>
    <property type="match status" value="1"/>
</dbReference>
<dbReference type="PIRSF" id="PIRSF001549">
    <property type="entry name" value="His-tRNA_synth"/>
    <property type="match status" value="1"/>
</dbReference>
<dbReference type="SUPFAM" id="SSF52954">
    <property type="entry name" value="Class II aaRS ABD-related"/>
    <property type="match status" value="1"/>
</dbReference>
<dbReference type="SUPFAM" id="SSF55681">
    <property type="entry name" value="Class II aaRS and biotin synthetases"/>
    <property type="match status" value="1"/>
</dbReference>
<dbReference type="PROSITE" id="PS50862">
    <property type="entry name" value="AA_TRNA_LIGASE_II"/>
    <property type="match status" value="1"/>
</dbReference>
<comment type="catalytic activity">
    <reaction evidence="1">
        <text>tRNA(His) + L-histidine + ATP = L-histidyl-tRNA(His) + AMP + diphosphate + H(+)</text>
        <dbReference type="Rhea" id="RHEA:17313"/>
        <dbReference type="Rhea" id="RHEA-COMP:9665"/>
        <dbReference type="Rhea" id="RHEA-COMP:9689"/>
        <dbReference type="ChEBI" id="CHEBI:15378"/>
        <dbReference type="ChEBI" id="CHEBI:30616"/>
        <dbReference type="ChEBI" id="CHEBI:33019"/>
        <dbReference type="ChEBI" id="CHEBI:57595"/>
        <dbReference type="ChEBI" id="CHEBI:78442"/>
        <dbReference type="ChEBI" id="CHEBI:78527"/>
        <dbReference type="ChEBI" id="CHEBI:456215"/>
        <dbReference type="EC" id="6.1.1.21"/>
    </reaction>
</comment>
<comment type="subunit">
    <text evidence="1">Homodimer.</text>
</comment>
<comment type="subcellular location">
    <subcellularLocation>
        <location evidence="1">Cytoplasm</location>
    </subcellularLocation>
</comment>
<comment type="similarity">
    <text evidence="1">Belongs to the class-II aminoacyl-tRNA synthetase family.</text>
</comment>
<reference key="1">
    <citation type="journal article" date="2005" name="J. Bacteriol.">
        <title>Complete genome sequence and analysis of the multiresistant nosocomial pathogen Corynebacterium jeikeium K411, a lipid-requiring bacterium of the human skin flora.</title>
        <authorList>
            <person name="Tauch A."/>
            <person name="Kaiser O."/>
            <person name="Hain T."/>
            <person name="Goesmann A."/>
            <person name="Weisshaar B."/>
            <person name="Albersmeier A."/>
            <person name="Bekel T."/>
            <person name="Bischoff N."/>
            <person name="Brune I."/>
            <person name="Chakraborty T."/>
            <person name="Kalinowski J."/>
            <person name="Meyer F."/>
            <person name="Rupp O."/>
            <person name="Schneiker S."/>
            <person name="Viehoever P."/>
            <person name="Puehler A."/>
        </authorList>
    </citation>
    <scope>NUCLEOTIDE SEQUENCE [LARGE SCALE GENOMIC DNA]</scope>
    <source>
        <strain>K411</strain>
    </source>
</reference>
<organism>
    <name type="scientific">Corynebacterium jeikeium (strain K411)</name>
    <dbReference type="NCBI Taxonomy" id="306537"/>
    <lineage>
        <taxon>Bacteria</taxon>
        <taxon>Bacillati</taxon>
        <taxon>Actinomycetota</taxon>
        <taxon>Actinomycetes</taxon>
        <taxon>Mycobacteriales</taxon>
        <taxon>Corynebacteriaceae</taxon>
        <taxon>Corynebacterium</taxon>
    </lineage>
</organism>
<proteinExistence type="inferred from homology"/>
<feature type="chain" id="PRO_0000136148" description="Histidine--tRNA ligase">
    <location>
        <begin position="1"/>
        <end position="443"/>
    </location>
</feature>
<feature type="region of interest" description="Disordered" evidence="2">
    <location>
        <begin position="1"/>
        <end position="21"/>
    </location>
</feature>
<feature type="compositionally biased region" description="Basic and acidic residues" evidence="2">
    <location>
        <begin position="1"/>
        <end position="20"/>
    </location>
</feature>
<evidence type="ECO:0000255" key="1">
    <source>
        <dbReference type="HAMAP-Rule" id="MF_00127"/>
    </source>
</evidence>
<evidence type="ECO:0000256" key="2">
    <source>
        <dbReference type="SAM" id="MobiDB-lite"/>
    </source>
</evidence>
<gene>
    <name evidence="1" type="primary">hisS</name>
    <name type="ordered locus">jk1045</name>
</gene>
<name>SYH_CORJK</name>